<dbReference type="EMBL" id="CP000653">
    <property type="protein sequence ID" value="ABP60043.1"/>
    <property type="molecule type" value="Genomic_DNA"/>
</dbReference>
<dbReference type="RefSeq" id="WP_012016762.1">
    <property type="nucleotide sequence ID" value="NC_009436.1"/>
</dbReference>
<dbReference type="SMR" id="A4W8L3"/>
<dbReference type="STRING" id="399742.Ent638_1362"/>
<dbReference type="GeneID" id="93308459"/>
<dbReference type="KEGG" id="ent:Ent638_1362"/>
<dbReference type="eggNOG" id="COG0569">
    <property type="taxonomic scope" value="Bacteria"/>
</dbReference>
<dbReference type="eggNOG" id="COG2985">
    <property type="taxonomic scope" value="Bacteria"/>
</dbReference>
<dbReference type="HOGENOM" id="CLU_035023_2_2_6"/>
<dbReference type="OrthoDB" id="5166626at2"/>
<dbReference type="Proteomes" id="UP000000230">
    <property type="component" value="Chromosome"/>
</dbReference>
<dbReference type="GO" id="GO:0005886">
    <property type="term" value="C:plasma membrane"/>
    <property type="evidence" value="ECO:0007669"/>
    <property type="project" value="UniProtKB-SubCell"/>
</dbReference>
<dbReference type="GO" id="GO:0008324">
    <property type="term" value="F:monoatomic cation transmembrane transporter activity"/>
    <property type="evidence" value="ECO:0007669"/>
    <property type="project" value="InterPro"/>
</dbReference>
<dbReference type="GO" id="GO:0006813">
    <property type="term" value="P:potassium ion transport"/>
    <property type="evidence" value="ECO:0007669"/>
    <property type="project" value="InterPro"/>
</dbReference>
<dbReference type="FunFam" id="3.30.70.1450:FF:000003">
    <property type="entry name" value="Putative transport protein YbjL"/>
    <property type="match status" value="1"/>
</dbReference>
<dbReference type="Gene3D" id="3.30.70.1450">
    <property type="entry name" value="Regulator of K+ conductance, C-terminal domain"/>
    <property type="match status" value="2"/>
</dbReference>
<dbReference type="HAMAP" id="MF_01015">
    <property type="entry name" value="YbjL"/>
    <property type="match status" value="1"/>
</dbReference>
<dbReference type="InterPro" id="IPR050144">
    <property type="entry name" value="AAE_transporter"/>
</dbReference>
<dbReference type="InterPro" id="IPR006037">
    <property type="entry name" value="RCK_C"/>
</dbReference>
<dbReference type="InterPro" id="IPR036721">
    <property type="entry name" value="RCK_C_sf"/>
</dbReference>
<dbReference type="InterPro" id="IPR023017">
    <property type="entry name" value="Transp_YbjL_put"/>
</dbReference>
<dbReference type="InterPro" id="IPR006512">
    <property type="entry name" value="YidE_YbjL"/>
</dbReference>
<dbReference type="NCBIfam" id="NF003440">
    <property type="entry name" value="PRK04972.1"/>
    <property type="match status" value="1"/>
</dbReference>
<dbReference type="NCBIfam" id="TIGR01625">
    <property type="entry name" value="YidE_YbjL_dupl"/>
    <property type="match status" value="2"/>
</dbReference>
<dbReference type="PANTHER" id="PTHR30445">
    <property type="entry name" value="K(+)_H(+) ANTIPORTER SUBUNIT KHTT"/>
    <property type="match status" value="1"/>
</dbReference>
<dbReference type="PANTHER" id="PTHR30445:SF10">
    <property type="entry name" value="TRANSPORT PROTEIN YBJL-RELATED"/>
    <property type="match status" value="1"/>
</dbReference>
<dbReference type="Pfam" id="PF06826">
    <property type="entry name" value="Asp-Al_Ex"/>
    <property type="match status" value="2"/>
</dbReference>
<dbReference type="Pfam" id="PF02080">
    <property type="entry name" value="TrkA_C"/>
    <property type="match status" value="2"/>
</dbReference>
<dbReference type="SUPFAM" id="SSF116726">
    <property type="entry name" value="TrkA C-terminal domain-like"/>
    <property type="match status" value="2"/>
</dbReference>
<dbReference type="PROSITE" id="PS51202">
    <property type="entry name" value="RCK_C"/>
    <property type="match status" value="2"/>
</dbReference>
<name>Y1362_ENT38</name>
<reference key="1">
    <citation type="journal article" date="2010" name="PLoS Genet.">
        <title>Genome sequence of the plant growth promoting endophytic bacterium Enterobacter sp. 638.</title>
        <authorList>
            <person name="Taghavi S."/>
            <person name="van der Lelie D."/>
            <person name="Hoffman A."/>
            <person name="Zhang Y.B."/>
            <person name="Walla M.D."/>
            <person name="Vangronsveld J."/>
            <person name="Newman L."/>
            <person name="Monchy S."/>
        </authorList>
    </citation>
    <scope>NUCLEOTIDE SEQUENCE [LARGE SCALE GENOMIC DNA]</scope>
    <source>
        <strain>638</strain>
    </source>
</reference>
<protein>
    <recommendedName>
        <fullName evidence="1">Putative transport protein Ent638_1362</fullName>
    </recommendedName>
</protein>
<comment type="subcellular location">
    <subcellularLocation>
        <location evidence="1">Cell membrane</location>
        <topology evidence="1">Multi-pass membrane protein</topology>
    </subcellularLocation>
</comment>
<comment type="similarity">
    <text evidence="1">Belongs to the AAE transporter (TC 2.A.81) family. YbjL subfamily.</text>
</comment>
<sequence>MNINVADLLNGNYILLLFVVLALGLCLGKLRLGSVQLGNSIGVLVVSLLLGQQHFSINTDALNLGFMLFIFCVGVEAGPNFFSIFFRDGKNYLMLALVMVGSALIIALGLGKLFGWDIGLTAGMLAGSMTSTPVLVGAGDTLRHSGMEGSQLSVALDHLSLGYALTYLIGLVSLIVAARYLPKLQHQDLQTSAQQIARERGLDTDTKRKVYLPVIRAYRVGPELVAWADGKNLRELGIYRQTGCYIERIRRNGILANPDGDAVLQMGDDIALVGYPDAHARLDPSFRNGKEVFDRDLLDMRIVTEEIVVKNHNAVGRRLAQLKLTDHGCFLNRVIRSQIEMPIDDNVVLNKGDVLQVSGDARRVKTVADRIGFISIHSQVTDLLAFCAFFIVGLMIGMITFQFSNFSFGVGNAAGLLFAGIMLGFLRANHPTFGYIPQGALNMVKEFGLMVFMAGVGLSAGSGIGHSLGAVGWQMLVAGLIVSLLPVVICFLFGAYVLRMNRAMLFGAMMGARTCAPAMEIISDTARSNIPALGYAGTYAIANVLLTLAGTLIIIIWPGLG</sequence>
<organism>
    <name type="scientific">Enterobacter sp. (strain 638)</name>
    <dbReference type="NCBI Taxonomy" id="399742"/>
    <lineage>
        <taxon>Bacteria</taxon>
        <taxon>Pseudomonadati</taxon>
        <taxon>Pseudomonadota</taxon>
        <taxon>Gammaproteobacteria</taxon>
        <taxon>Enterobacterales</taxon>
        <taxon>Enterobacteriaceae</taxon>
        <taxon>Enterobacter</taxon>
    </lineage>
</organism>
<accession>A4W8L3</accession>
<proteinExistence type="inferred from homology"/>
<evidence type="ECO:0000255" key="1">
    <source>
        <dbReference type="HAMAP-Rule" id="MF_01015"/>
    </source>
</evidence>
<feature type="chain" id="PRO_0000329140" description="Putative transport protein Ent638_1362">
    <location>
        <begin position="1"/>
        <end position="561"/>
    </location>
</feature>
<feature type="transmembrane region" description="Helical" evidence="1">
    <location>
        <begin position="8"/>
        <end position="28"/>
    </location>
</feature>
<feature type="transmembrane region" description="Helical" evidence="1">
    <location>
        <begin position="32"/>
        <end position="52"/>
    </location>
</feature>
<feature type="transmembrane region" description="Helical" evidence="1">
    <location>
        <begin position="66"/>
        <end position="86"/>
    </location>
</feature>
<feature type="transmembrane region" description="Helical" evidence="1">
    <location>
        <begin position="94"/>
        <end position="114"/>
    </location>
</feature>
<feature type="transmembrane region" description="Helical" evidence="1">
    <location>
        <begin position="158"/>
        <end position="178"/>
    </location>
</feature>
<feature type="transmembrane region" description="Helical" evidence="1">
    <location>
        <begin position="383"/>
        <end position="403"/>
    </location>
</feature>
<feature type="transmembrane region" description="Helical" evidence="1">
    <location>
        <begin position="406"/>
        <end position="426"/>
    </location>
</feature>
<feature type="transmembrane region" description="Helical" evidence="1">
    <location>
        <begin position="447"/>
        <end position="467"/>
    </location>
</feature>
<feature type="transmembrane region" description="Helical" evidence="1">
    <location>
        <begin position="475"/>
        <end position="495"/>
    </location>
</feature>
<feature type="transmembrane region" description="Helical" evidence="1">
    <location>
        <begin position="540"/>
        <end position="560"/>
    </location>
</feature>
<feature type="domain" description="RCK C-terminal 1" evidence="1">
    <location>
        <begin position="202"/>
        <end position="288"/>
    </location>
</feature>
<feature type="domain" description="RCK C-terminal 2" evidence="1">
    <location>
        <begin position="292"/>
        <end position="373"/>
    </location>
</feature>
<gene>
    <name type="ordered locus">Ent638_1362</name>
</gene>
<keyword id="KW-1003">Cell membrane</keyword>
<keyword id="KW-0472">Membrane</keyword>
<keyword id="KW-0677">Repeat</keyword>
<keyword id="KW-0812">Transmembrane</keyword>
<keyword id="KW-1133">Transmembrane helix</keyword>
<keyword id="KW-0813">Transport</keyword>